<dbReference type="EMBL" id="CP000034">
    <property type="protein sequence ID" value="ABB61199.1"/>
    <property type="molecule type" value="Genomic_DNA"/>
</dbReference>
<dbReference type="RefSeq" id="WP_001240091.1">
    <property type="nucleotide sequence ID" value="NC_007606.1"/>
</dbReference>
<dbReference type="RefSeq" id="YP_402690.1">
    <property type="nucleotide sequence ID" value="NC_007606.1"/>
</dbReference>
<dbReference type="STRING" id="300267.SDY_1034"/>
<dbReference type="EnsemblBacteria" id="ABB61199">
    <property type="protein sequence ID" value="ABB61199"/>
    <property type="gene ID" value="SDY_1034"/>
</dbReference>
<dbReference type="KEGG" id="sdy:SDY_1034"/>
<dbReference type="PATRIC" id="fig|300267.13.peg.1208"/>
<dbReference type="HOGENOM" id="CLU_080662_1_0_6"/>
<dbReference type="Proteomes" id="UP000002716">
    <property type="component" value="Chromosome"/>
</dbReference>
<dbReference type="GO" id="GO:0005886">
    <property type="term" value="C:plasma membrane"/>
    <property type="evidence" value="ECO:0007669"/>
    <property type="project" value="UniProtKB-SubCell"/>
</dbReference>
<dbReference type="GO" id="GO:0009055">
    <property type="term" value="F:electron transfer activity"/>
    <property type="evidence" value="ECO:0007669"/>
    <property type="project" value="UniProtKB-UniRule"/>
</dbReference>
<dbReference type="GO" id="GO:0010181">
    <property type="term" value="F:FMN binding"/>
    <property type="evidence" value="ECO:0007669"/>
    <property type="project" value="UniProtKB-UniRule"/>
</dbReference>
<dbReference type="GO" id="GO:0020037">
    <property type="term" value="F:heme binding"/>
    <property type="evidence" value="ECO:0007669"/>
    <property type="project" value="UniProtKB-UniRule"/>
</dbReference>
<dbReference type="GO" id="GO:0046872">
    <property type="term" value="F:metal ion binding"/>
    <property type="evidence" value="ECO:0007669"/>
    <property type="project" value="UniProtKB-KW"/>
</dbReference>
<dbReference type="GO" id="GO:0016679">
    <property type="term" value="F:oxidoreductase activity, acting on diphenols and related substances as donors"/>
    <property type="evidence" value="ECO:0007669"/>
    <property type="project" value="TreeGrafter"/>
</dbReference>
<dbReference type="GO" id="GO:0030091">
    <property type="term" value="P:protein repair"/>
    <property type="evidence" value="ECO:0007669"/>
    <property type="project" value="UniProtKB-UniRule"/>
</dbReference>
<dbReference type="HAMAP" id="MF_01207">
    <property type="entry name" value="MsrQ"/>
    <property type="match status" value="1"/>
</dbReference>
<dbReference type="InterPro" id="IPR013130">
    <property type="entry name" value="Fe3_Rdtase_TM_dom"/>
</dbReference>
<dbReference type="InterPro" id="IPR022837">
    <property type="entry name" value="MsrQ-like"/>
</dbReference>
<dbReference type="NCBIfam" id="NF003830">
    <property type="entry name" value="PRK05419.1-1"/>
    <property type="match status" value="1"/>
</dbReference>
<dbReference type="NCBIfam" id="NF003831">
    <property type="entry name" value="PRK05419.1-2"/>
    <property type="match status" value="1"/>
</dbReference>
<dbReference type="NCBIfam" id="NF003832">
    <property type="entry name" value="PRK05419.1-4"/>
    <property type="match status" value="1"/>
</dbReference>
<dbReference type="PANTHER" id="PTHR36964">
    <property type="entry name" value="PROTEIN-METHIONINE-SULFOXIDE REDUCTASE HEME-BINDING SUBUNIT MSRQ"/>
    <property type="match status" value="1"/>
</dbReference>
<dbReference type="PANTHER" id="PTHR36964:SF1">
    <property type="entry name" value="PROTEIN-METHIONINE-SULFOXIDE REDUCTASE HEME-BINDING SUBUNIT MSRQ"/>
    <property type="match status" value="1"/>
</dbReference>
<dbReference type="Pfam" id="PF01794">
    <property type="entry name" value="Ferric_reduct"/>
    <property type="match status" value="1"/>
</dbReference>
<feature type="chain" id="PRO_1000085535" description="Protein-methionine-sulfoxide reductase heme-binding subunit MsrQ">
    <location>
        <begin position="1"/>
        <end position="211"/>
    </location>
</feature>
<feature type="transmembrane region" description="Helical" evidence="1">
    <location>
        <begin position="10"/>
        <end position="30"/>
    </location>
</feature>
<feature type="transmembrane region" description="Helical" evidence="1">
    <location>
        <begin position="82"/>
        <end position="102"/>
    </location>
</feature>
<feature type="transmembrane region" description="Helical" evidence="1">
    <location>
        <begin position="116"/>
        <end position="136"/>
    </location>
</feature>
<feature type="transmembrane region" description="Helical" evidence="1">
    <location>
        <begin position="153"/>
        <end position="173"/>
    </location>
</feature>
<proteinExistence type="inferred from homology"/>
<gene>
    <name evidence="1" type="primary">msrQ</name>
    <name type="ordered locus">SDY_1034</name>
</gene>
<keyword id="KW-0997">Cell inner membrane</keyword>
<keyword id="KW-1003">Cell membrane</keyword>
<keyword id="KW-0249">Electron transport</keyword>
<keyword id="KW-0285">Flavoprotein</keyword>
<keyword id="KW-0288">FMN</keyword>
<keyword id="KW-0349">Heme</keyword>
<keyword id="KW-0408">Iron</keyword>
<keyword id="KW-0472">Membrane</keyword>
<keyword id="KW-0479">Metal-binding</keyword>
<keyword id="KW-1185">Reference proteome</keyword>
<keyword id="KW-0812">Transmembrane</keyword>
<keyword id="KW-1133">Transmembrane helix</keyword>
<keyword id="KW-0813">Transport</keyword>
<name>MSRQ_SHIDS</name>
<protein>
    <recommendedName>
        <fullName evidence="1">Protein-methionine-sulfoxide reductase heme-binding subunit MsrQ</fullName>
    </recommendedName>
    <alternativeName>
        <fullName evidence="1">Flavocytochrome MsrQ</fullName>
    </alternativeName>
</protein>
<sequence>MRLTAKQVTWLKVCLHLAGLLPFLWLVWAINHGGLGADPVKDIQHFTGRTALKFLLATLLITPLARYAKQPLLIRTRRLLGLWCFAWATLHLTSYALLELGVNNLALLGKELITRPYLTLGIISWVILLALAFTSTQAMQRKLGKHWQQLHNFVYLVAILAPIHYLWSVKIISPQPLIYAGLAVLLLALRYKKLRSLFNRLRKQVHNKLSV</sequence>
<accession>Q32HK6</accession>
<reference key="1">
    <citation type="journal article" date="2005" name="Nucleic Acids Res.">
        <title>Genome dynamics and diversity of Shigella species, the etiologic agents of bacillary dysentery.</title>
        <authorList>
            <person name="Yang F."/>
            <person name="Yang J."/>
            <person name="Zhang X."/>
            <person name="Chen L."/>
            <person name="Jiang Y."/>
            <person name="Yan Y."/>
            <person name="Tang X."/>
            <person name="Wang J."/>
            <person name="Xiong Z."/>
            <person name="Dong J."/>
            <person name="Xue Y."/>
            <person name="Zhu Y."/>
            <person name="Xu X."/>
            <person name="Sun L."/>
            <person name="Chen S."/>
            <person name="Nie H."/>
            <person name="Peng J."/>
            <person name="Xu J."/>
            <person name="Wang Y."/>
            <person name="Yuan Z."/>
            <person name="Wen Y."/>
            <person name="Yao Z."/>
            <person name="Shen Y."/>
            <person name="Qiang B."/>
            <person name="Hou Y."/>
            <person name="Yu J."/>
            <person name="Jin Q."/>
        </authorList>
    </citation>
    <scope>NUCLEOTIDE SEQUENCE [LARGE SCALE GENOMIC DNA]</scope>
    <source>
        <strain>Sd197</strain>
    </source>
</reference>
<evidence type="ECO:0000255" key="1">
    <source>
        <dbReference type="HAMAP-Rule" id="MF_01207"/>
    </source>
</evidence>
<organism>
    <name type="scientific">Shigella dysenteriae serotype 1 (strain Sd197)</name>
    <dbReference type="NCBI Taxonomy" id="300267"/>
    <lineage>
        <taxon>Bacteria</taxon>
        <taxon>Pseudomonadati</taxon>
        <taxon>Pseudomonadota</taxon>
        <taxon>Gammaproteobacteria</taxon>
        <taxon>Enterobacterales</taxon>
        <taxon>Enterobacteriaceae</taxon>
        <taxon>Shigella</taxon>
    </lineage>
</organism>
<comment type="function">
    <text evidence="1">Part of the MsrPQ system that repairs oxidized periplasmic proteins containing methionine sulfoxide residues (Met-O), using respiratory chain electrons. Thus protects these proteins from oxidative-stress damage caused by reactive species of oxygen and chlorine generated by the host defense mechanisms. MsrPQ is essential for the maintenance of envelope integrity under bleach stress, rescuing a wide series of structurally unrelated periplasmic proteins from methionine oxidation, including the primary periplasmic chaperone SurA and the lipoprotein Pal. MsrQ provides electrons for reduction to the reductase catalytic subunit MsrP, using the quinone pool of the respiratory chain.</text>
</comment>
<comment type="cofactor">
    <cofactor evidence="1">
        <name>FMN</name>
        <dbReference type="ChEBI" id="CHEBI:58210"/>
    </cofactor>
    <text evidence="1">Binds 1 FMN per subunit.</text>
</comment>
<comment type="cofactor">
    <cofactor evidence="1">
        <name>heme b</name>
        <dbReference type="ChEBI" id="CHEBI:60344"/>
    </cofactor>
    <text evidence="1">Binds 1 heme b (iron(II)-protoporphyrin IX) group per subunit.</text>
</comment>
<comment type="subunit">
    <text evidence="1">Heterodimer of a catalytic subunit (MsrP) and a heme-binding subunit (MsrQ).</text>
</comment>
<comment type="subcellular location">
    <subcellularLocation>
        <location evidence="1">Cell inner membrane</location>
        <topology evidence="1">Multi-pass membrane protein</topology>
    </subcellularLocation>
</comment>
<comment type="similarity">
    <text evidence="1">Belongs to the MsrQ family.</text>
</comment>